<accession>Q634M5</accession>
<organism>
    <name type="scientific">Bacillus cereus (strain ZK / E33L)</name>
    <dbReference type="NCBI Taxonomy" id="288681"/>
    <lineage>
        <taxon>Bacteria</taxon>
        <taxon>Bacillati</taxon>
        <taxon>Bacillota</taxon>
        <taxon>Bacilli</taxon>
        <taxon>Bacillales</taxon>
        <taxon>Bacillaceae</taxon>
        <taxon>Bacillus</taxon>
        <taxon>Bacillus cereus group</taxon>
    </lineage>
</organism>
<sequence length="338" mass="37872">MLTERQLLILQTIIDDFIGSAQPVGSRTLAKKDAITFSSATIRNEMADLEELGFIEKTHSSSGRVPSEKGYRFYVDHLLAPQNLPKDEIVQIKDLFAERIFEAEKIAQQSAQILSELTNYTAIVLGPKLSTNKLKNVQIVPLDRQTAVAIIVTDTGHVQSKTITVPESVDLSDLEKMVNILNEKLSGVPMSELHNKIFKEIVTVLRGYVHNYDSAIKMLDGTFQVPLSEKIYFGGKANMLSQPEFHDIHKVRSLLTMIDNEAEFYDILRHKQVGIQVKIGRENSATAMEDCSLISATYSIGEEQLGTIAILGPTRMQYSRVISLLQLFTRQFTDGLKK</sequence>
<feature type="chain" id="PRO_0000182443" description="Heat-inducible transcription repressor HrcA">
    <location>
        <begin position="1"/>
        <end position="338"/>
    </location>
</feature>
<dbReference type="EMBL" id="CP000001">
    <property type="protein sequence ID" value="AAU16205.1"/>
    <property type="molecule type" value="Genomic_DNA"/>
</dbReference>
<dbReference type="RefSeq" id="WP_000954939.1">
    <property type="nucleotide sequence ID" value="NZ_CP009968.1"/>
</dbReference>
<dbReference type="SMR" id="Q634M5"/>
<dbReference type="KEGG" id="bcz:BCE33L4063"/>
<dbReference type="PATRIC" id="fig|288681.22.peg.1327"/>
<dbReference type="Proteomes" id="UP000002612">
    <property type="component" value="Chromosome"/>
</dbReference>
<dbReference type="GO" id="GO:0003677">
    <property type="term" value="F:DNA binding"/>
    <property type="evidence" value="ECO:0007669"/>
    <property type="project" value="InterPro"/>
</dbReference>
<dbReference type="GO" id="GO:0045892">
    <property type="term" value="P:negative regulation of DNA-templated transcription"/>
    <property type="evidence" value="ECO:0007669"/>
    <property type="project" value="UniProtKB-UniRule"/>
</dbReference>
<dbReference type="FunFam" id="1.10.10.10:FF:000049">
    <property type="entry name" value="Heat-inducible transcription repressor HrcA"/>
    <property type="match status" value="1"/>
</dbReference>
<dbReference type="FunFam" id="3.30.390.60:FF:000001">
    <property type="entry name" value="Heat-inducible transcription repressor HrcA"/>
    <property type="match status" value="1"/>
</dbReference>
<dbReference type="Gene3D" id="3.30.450.40">
    <property type="match status" value="1"/>
</dbReference>
<dbReference type="Gene3D" id="3.30.390.60">
    <property type="entry name" value="Heat-inducible transcription repressor hrca homolog, domain 3"/>
    <property type="match status" value="1"/>
</dbReference>
<dbReference type="Gene3D" id="1.10.10.10">
    <property type="entry name" value="Winged helix-like DNA-binding domain superfamily/Winged helix DNA-binding domain"/>
    <property type="match status" value="1"/>
</dbReference>
<dbReference type="HAMAP" id="MF_00081">
    <property type="entry name" value="HrcA"/>
    <property type="match status" value="1"/>
</dbReference>
<dbReference type="InterPro" id="IPR029016">
    <property type="entry name" value="GAF-like_dom_sf"/>
</dbReference>
<dbReference type="InterPro" id="IPR002571">
    <property type="entry name" value="HrcA"/>
</dbReference>
<dbReference type="InterPro" id="IPR021153">
    <property type="entry name" value="HrcA_C"/>
</dbReference>
<dbReference type="InterPro" id="IPR036388">
    <property type="entry name" value="WH-like_DNA-bd_sf"/>
</dbReference>
<dbReference type="InterPro" id="IPR036390">
    <property type="entry name" value="WH_DNA-bd_sf"/>
</dbReference>
<dbReference type="InterPro" id="IPR023120">
    <property type="entry name" value="WHTH_transcript_rep_HrcA_IDD"/>
</dbReference>
<dbReference type="NCBIfam" id="TIGR00331">
    <property type="entry name" value="hrcA"/>
    <property type="match status" value="1"/>
</dbReference>
<dbReference type="PANTHER" id="PTHR34824">
    <property type="entry name" value="HEAT-INDUCIBLE TRANSCRIPTION REPRESSOR HRCA"/>
    <property type="match status" value="1"/>
</dbReference>
<dbReference type="PANTHER" id="PTHR34824:SF1">
    <property type="entry name" value="HEAT-INDUCIBLE TRANSCRIPTION REPRESSOR HRCA"/>
    <property type="match status" value="1"/>
</dbReference>
<dbReference type="Pfam" id="PF01628">
    <property type="entry name" value="HrcA"/>
    <property type="match status" value="1"/>
</dbReference>
<dbReference type="PIRSF" id="PIRSF005485">
    <property type="entry name" value="HrcA"/>
    <property type="match status" value="1"/>
</dbReference>
<dbReference type="SUPFAM" id="SSF55781">
    <property type="entry name" value="GAF domain-like"/>
    <property type="match status" value="1"/>
</dbReference>
<dbReference type="SUPFAM" id="SSF46785">
    <property type="entry name" value="Winged helix' DNA-binding domain"/>
    <property type="match status" value="1"/>
</dbReference>
<gene>
    <name evidence="1" type="primary">hrcA</name>
    <name type="ordered locus">BCE33L4063</name>
</gene>
<comment type="function">
    <text evidence="1">Negative regulator of class I heat shock genes (grpE-dnaK-dnaJ and groELS operons). Prevents heat-shock induction of these operons.</text>
</comment>
<comment type="similarity">
    <text evidence="1">Belongs to the HrcA family.</text>
</comment>
<proteinExistence type="inferred from homology"/>
<keyword id="KW-0678">Repressor</keyword>
<keyword id="KW-0346">Stress response</keyword>
<keyword id="KW-0804">Transcription</keyword>
<keyword id="KW-0805">Transcription regulation</keyword>
<protein>
    <recommendedName>
        <fullName evidence="1">Heat-inducible transcription repressor HrcA</fullName>
    </recommendedName>
</protein>
<name>HRCA_BACCZ</name>
<evidence type="ECO:0000255" key="1">
    <source>
        <dbReference type="HAMAP-Rule" id="MF_00081"/>
    </source>
</evidence>
<reference key="1">
    <citation type="journal article" date="2006" name="J. Bacteriol.">
        <title>Pathogenomic sequence analysis of Bacillus cereus and Bacillus thuringiensis isolates closely related to Bacillus anthracis.</title>
        <authorList>
            <person name="Han C.S."/>
            <person name="Xie G."/>
            <person name="Challacombe J.F."/>
            <person name="Altherr M.R."/>
            <person name="Bhotika S.S."/>
            <person name="Bruce D."/>
            <person name="Campbell C.S."/>
            <person name="Campbell M.L."/>
            <person name="Chen J."/>
            <person name="Chertkov O."/>
            <person name="Cleland C."/>
            <person name="Dimitrijevic M."/>
            <person name="Doggett N.A."/>
            <person name="Fawcett J.J."/>
            <person name="Glavina T."/>
            <person name="Goodwin L.A."/>
            <person name="Hill K.K."/>
            <person name="Hitchcock P."/>
            <person name="Jackson P.J."/>
            <person name="Keim P."/>
            <person name="Kewalramani A.R."/>
            <person name="Longmire J."/>
            <person name="Lucas S."/>
            <person name="Malfatti S."/>
            <person name="McMurry K."/>
            <person name="Meincke L.J."/>
            <person name="Misra M."/>
            <person name="Moseman B.L."/>
            <person name="Mundt M."/>
            <person name="Munk A.C."/>
            <person name="Okinaka R.T."/>
            <person name="Parson-Quintana B."/>
            <person name="Reilly L.P."/>
            <person name="Richardson P."/>
            <person name="Robinson D.L."/>
            <person name="Rubin E."/>
            <person name="Saunders E."/>
            <person name="Tapia R."/>
            <person name="Tesmer J.G."/>
            <person name="Thayer N."/>
            <person name="Thompson L.S."/>
            <person name="Tice H."/>
            <person name="Ticknor L.O."/>
            <person name="Wills P.L."/>
            <person name="Brettin T.S."/>
            <person name="Gilna P."/>
        </authorList>
    </citation>
    <scope>NUCLEOTIDE SEQUENCE [LARGE SCALE GENOMIC DNA]</scope>
    <source>
        <strain>ZK / E33L</strain>
    </source>
</reference>